<sequence length="479" mass="53249">MAQHAVYFPDAFLTQMREAMPSTLSFDEFISACQRPLRRSIRINTLKISVADFLALIAPYGWSLTPIPWCHEGFWIERDDEEALPLGSTAEHLSGLFYIQEASSMLPVAALFADDNHPQRVMDMAAAPGSKTTQIAARMGNRGAILANEFSASRVKVLHANISRCGIANTALTHFDGRVFGAALPEMFDAILLDAPCSGEGVVRKDPDALKNWSPESNLDIAATQRELLDSAFHALRPGGTLVYSTCTLNRQENEAVCLWLKETYADAVEFLPLGDLFPDADRALTPEGFLHVFPQIYDCEGFFVARLRKMSSLPAMPAPGYKVGAFPFTPLKGREALHVTQAANAVGLLWDENLHLWQRDKEVWLFPAEIESLIGKVRFSRLGIKLAESHNKGYRWQHEATIALACPTHAHAFELSAQEAEEWYRGRDIYPQTPPAADDVLVTFQHQPLGLAKRIGARIKNSYPRELVRDGKLFTGNS</sequence>
<organism>
    <name type="scientific">Salmonella schwarzengrund (strain CVM19633)</name>
    <dbReference type="NCBI Taxonomy" id="439843"/>
    <lineage>
        <taxon>Bacteria</taxon>
        <taxon>Pseudomonadati</taxon>
        <taxon>Pseudomonadota</taxon>
        <taxon>Gammaproteobacteria</taxon>
        <taxon>Enterobacterales</taxon>
        <taxon>Enterobacteriaceae</taxon>
        <taxon>Salmonella</taxon>
    </lineage>
</organism>
<protein>
    <recommendedName>
        <fullName evidence="1">Ribosomal RNA small subunit methyltransferase F</fullName>
        <ecNumber evidence="1">2.1.1.178</ecNumber>
    </recommendedName>
    <alternativeName>
        <fullName evidence="1">16S rRNA m5C1407 methyltransferase</fullName>
    </alternativeName>
    <alternativeName>
        <fullName evidence="1">rRNA (cytosine-C(5)-)-methyltransferase RsmF</fullName>
    </alternativeName>
</protein>
<dbReference type="EC" id="2.1.1.178" evidence="1"/>
<dbReference type="EMBL" id="CP001127">
    <property type="protein sequence ID" value="ACF89212.1"/>
    <property type="status" value="ALT_INIT"/>
    <property type="molecule type" value="Genomic_DNA"/>
</dbReference>
<dbReference type="RefSeq" id="WP_001530936.1">
    <property type="nucleotide sequence ID" value="NC_011094.1"/>
</dbReference>
<dbReference type="SMR" id="B4TY18"/>
<dbReference type="KEGG" id="sew:SeSA_A1993"/>
<dbReference type="HOGENOM" id="CLU_005316_6_2_6"/>
<dbReference type="Proteomes" id="UP000001865">
    <property type="component" value="Chromosome"/>
</dbReference>
<dbReference type="GO" id="GO:0005737">
    <property type="term" value="C:cytoplasm"/>
    <property type="evidence" value="ECO:0007669"/>
    <property type="project" value="UniProtKB-SubCell"/>
</dbReference>
<dbReference type="GO" id="GO:0003723">
    <property type="term" value="F:RNA binding"/>
    <property type="evidence" value="ECO:0007669"/>
    <property type="project" value="UniProtKB-KW"/>
</dbReference>
<dbReference type="GO" id="GO:0009383">
    <property type="term" value="F:rRNA (cytosine-C5-)-methyltransferase activity"/>
    <property type="evidence" value="ECO:0007669"/>
    <property type="project" value="TreeGrafter"/>
</dbReference>
<dbReference type="GO" id="GO:0070475">
    <property type="term" value="P:rRNA base methylation"/>
    <property type="evidence" value="ECO:0007669"/>
    <property type="project" value="TreeGrafter"/>
</dbReference>
<dbReference type="CDD" id="cd02440">
    <property type="entry name" value="AdoMet_MTases"/>
    <property type="match status" value="1"/>
</dbReference>
<dbReference type="FunFam" id="3.10.450.720:FF:000001">
    <property type="entry name" value="Ribosomal RNA small subunit methyltransferase F"/>
    <property type="match status" value="1"/>
</dbReference>
<dbReference type="FunFam" id="3.40.50.150:FF:000079">
    <property type="entry name" value="Ribosomal RNA small subunit methyltransferase F"/>
    <property type="match status" value="1"/>
</dbReference>
<dbReference type="Gene3D" id="3.10.450.720">
    <property type="match status" value="1"/>
</dbReference>
<dbReference type="Gene3D" id="3.40.50.150">
    <property type="entry name" value="Vaccinia Virus protein VP39"/>
    <property type="match status" value="1"/>
</dbReference>
<dbReference type="HAMAP" id="MF_01579">
    <property type="entry name" value="16SrRNA_methyltr_F"/>
    <property type="match status" value="1"/>
</dbReference>
<dbReference type="InterPro" id="IPR031341">
    <property type="entry name" value="Methyltr_RsmF_N"/>
</dbReference>
<dbReference type="InterPro" id="IPR049560">
    <property type="entry name" value="MeTrfase_RsmB-F_NOP2_cat"/>
</dbReference>
<dbReference type="InterPro" id="IPR001678">
    <property type="entry name" value="MeTrfase_RsmB-F_NOP2_dom"/>
</dbReference>
<dbReference type="InterPro" id="IPR027391">
    <property type="entry name" value="Nol1_Nop2_Fmu_2"/>
</dbReference>
<dbReference type="InterPro" id="IPR011023">
    <property type="entry name" value="Nop2p"/>
</dbReference>
<dbReference type="InterPro" id="IPR023267">
    <property type="entry name" value="RCMT"/>
</dbReference>
<dbReference type="InterPro" id="IPR023545">
    <property type="entry name" value="rRNA_ssu_MeTfrase_F"/>
</dbReference>
<dbReference type="InterPro" id="IPR018314">
    <property type="entry name" value="RsmB/NOL1/NOP2-like_CS"/>
</dbReference>
<dbReference type="InterPro" id="IPR029063">
    <property type="entry name" value="SAM-dependent_MTases_sf"/>
</dbReference>
<dbReference type="InterPro" id="IPR048457">
    <property type="entry name" value="YebU_pre-PUA_dom"/>
</dbReference>
<dbReference type="NCBIfam" id="TIGR00446">
    <property type="entry name" value="nop2p"/>
    <property type="match status" value="1"/>
</dbReference>
<dbReference type="NCBIfam" id="NF008898">
    <property type="entry name" value="PRK11933.1"/>
    <property type="match status" value="1"/>
</dbReference>
<dbReference type="PANTHER" id="PTHR22807:SF30">
    <property type="entry name" value="28S RRNA (CYTOSINE(4447)-C(5))-METHYLTRANSFERASE-RELATED"/>
    <property type="match status" value="1"/>
</dbReference>
<dbReference type="PANTHER" id="PTHR22807">
    <property type="entry name" value="NOP2 YEAST -RELATED NOL1/NOP2/FMU SUN DOMAIN-CONTAINING"/>
    <property type="match status" value="1"/>
</dbReference>
<dbReference type="Pfam" id="PF01189">
    <property type="entry name" value="Methyltr_RsmB-F"/>
    <property type="match status" value="1"/>
</dbReference>
<dbReference type="Pfam" id="PF17125">
    <property type="entry name" value="Methyltr_RsmF_N"/>
    <property type="match status" value="1"/>
</dbReference>
<dbReference type="Pfam" id="PF13636">
    <property type="entry name" value="Methyltranf_PUA"/>
    <property type="match status" value="1"/>
</dbReference>
<dbReference type="Pfam" id="PF21150">
    <property type="entry name" value="YebU_pre-PUA_dom"/>
    <property type="match status" value="1"/>
</dbReference>
<dbReference type="PRINTS" id="PR02008">
    <property type="entry name" value="RCMTFAMILY"/>
</dbReference>
<dbReference type="SUPFAM" id="SSF53335">
    <property type="entry name" value="S-adenosyl-L-methionine-dependent methyltransferases"/>
    <property type="match status" value="1"/>
</dbReference>
<dbReference type="PROSITE" id="PS01153">
    <property type="entry name" value="NOL1_NOP2_SUN"/>
    <property type="match status" value="1"/>
</dbReference>
<dbReference type="PROSITE" id="PS51686">
    <property type="entry name" value="SAM_MT_RSMB_NOP"/>
    <property type="match status" value="1"/>
</dbReference>
<proteinExistence type="inferred from homology"/>
<comment type="function">
    <text evidence="1">Specifically methylates the cytosine at position 1407 (m5C1407) of 16S rRNA.</text>
</comment>
<comment type="catalytic activity">
    <reaction evidence="1">
        <text>cytidine(1407) in 16S rRNA + S-adenosyl-L-methionine = 5-methylcytidine(1407) in 16S rRNA + S-adenosyl-L-homocysteine + H(+)</text>
        <dbReference type="Rhea" id="RHEA:42756"/>
        <dbReference type="Rhea" id="RHEA-COMP:10223"/>
        <dbReference type="Rhea" id="RHEA-COMP:10224"/>
        <dbReference type="ChEBI" id="CHEBI:15378"/>
        <dbReference type="ChEBI" id="CHEBI:57856"/>
        <dbReference type="ChEBI" id="CHEBI:59789"/>
        <dbReference type="ChEBI" id="CHEBI:74483"/>
        <dbReference type="ChEBI" id="CHEBI:82748"/>
        <dbReference type="EC" id="2.1.1.178"/>
    </reaction>
</comment>
<comment type="subcellular location">
    <subcellularLocation>
        <location evidence="1">Cytoplasm</location>
    </subcellularLocation>
</comment>
<comment type="similarity">
    <text evidence="1">Belongs to the class I-like SAM-binding methyltransferase superfamily. RsmB/NOP family.</text>
</comment>
<comment type="sequence caution" evidence="2">
    <conflict type="erroneous initiation">
        <sequence resource="EMBL-CDS" id="ACF89212"/>
    </conflict>
</comment>
<accession>B4TY18</accession>
<name>RSMF_SALSV</name>
<feature type="chain" id="PRO_0000382581" description="Ribosomal RNA small subunit methyltransferase F">
    <location>
        <begin position="1"/>
        <end position="479"/>
    </location>
</feature>
<feature type="active site" description="Nucleophile" evidence="1">
    <location>
        <position position="247"/>
    </location>
</feature>
<feature type="binding site" evidence="1">
    <location>
        <begin position="125"/>
        <end position="131"/>
    </location>
    <ligand>
        <name>S-adenosyl-L-methionine</name>
        <dbReference type="ChEBI" id="CHEBI:59789"/>
    </ligand>
</feature>
<feature type="binding site" evidence="1">
    <location>
        <position position="149"/>
    </location>
    <ligand>
        <name>S-adenosyl-L-methionine</name>
        <dbReference type="ChEBI" id="CHEBI:59789"/>
    </ligand>
</feature>
<feature type="binding site" evidence="1">
    <location>
        <position position="176"/>
    </location>
    <ligand>
        <name>S-adenosyl-L-methionine</name>
        <dbReference type="ChEBI" id="CHEBI:59789"/>
    </ligand>
</feature>
<feature type="binding site" evidence="1">
    <location>
        <position position="194"/>
    </location>
    <ligand>
        <name>S-adenosyl-L-methionine</name>
        <dbReference type="ChEBI" id="CHEBI:59789"/>
    </ligand>
</feature>
<keyword id="KW-0963">Cytoplasm</keyword>
<keyword id="KW-0489">Methyltransferase</keyword>
<keyword id="KW-0694">RNA-binding</keyword>
<keyword id="KW-0698">rRNA processing</keyword>
<keyword id="KW-0949">S-adenosyl-L-methionine</keyword>
<keyword id="KW-0808">Transferase</keyword>
<evidence type="ECO:0000255" key="1">
    <source>
        <dbReference type="HAMAP-Rule" id="MF_01579"/>
    </source>
</evidence>
<evidence type="ECO:0000305" key="2"/>
<reference key="1">
    <citation type="journal article" date="2011" name="J. Bacteriol.">
        <title>Comparative genomics of 28 Salmonella enterica isolates: evidence for CRISPR-mediated adaptive sublineage evolution.</title>
        <authorList>
            <person name="Fricke W.F."/>
            <person name="Mammel M.K."/>
            <person name="McDermott P.F."/>
            <person name="Tartera C."/>
            <person name="White D.G."/>
            <person name="Leclerc J.E."/>
            <person name="Ravel J."/>
            <person name="Cebula T.A."/>
        </authorList>
    </citation>
    <scope>NUCLEOTIDE SEQUENCE [LARGE SCALE GENOMIC DNA]</scope>
    <source>
        <strain>CVM19633</strain>
    </source>
</reference>
<gene>
    <name evidence="1" type="primary">rsmF</name>
    <name type="ordered locus">SeSA_A1993</name>
</gene>